<protein>
    <recommendedName>
        <fullName>Nitrile hydratase subunit alpha</fullName>
        <shortName>NHase</shortName>
        <shortName>Nitrilase</shortName>
        <ecNumber>4.2.1.84</ecNumber>
    </recommendedName>
</protein>
<gene>
    <name type="primary">nthA</name>
</gene>
<evidence type="ECO:0000269" key="1">
    <source>
    </source>
</evidence>
<evidence type="ECO:0000269" key="2">
    <source>
    </source>
</evidence>
<evidence type="ECO:0000269" key="3">
    <source>
    </source>
</evidence>
<evidence type="ECO:0000305" key="4"/>
<evidence type="ECO:0007744" key="5">
    <source>
        <dbReference type="PDB" id="2AHJ"/>
    </source>
</evidence>
<evidence type="ECO:0007829" key="6">
    <source>
        <dbReference type="PDB" id="3A8G"/>
    </source>
</evidence>
<accession>P13448</accession>
<comment type="function">
    <text>NHase catalyzes the hydration of various nitrile compounds to the corresponding amides. Industrial production of acrylamide is now being developed using some of the enzymes of this class.</text>
</comment>
<comment type="catalytic activity">
    <reaction>
        <text>an aliphatic primary amide = an aliphatic nitrile + H2O</text>
        <dbReference type="Rhea" id="RHEA:12673"/>
        <dbReference type="ChEBI" id="CHEBI:15377"/>
        <dbReference type="ChEBI" id="CHEBI:65285"/>
        <dbReference type="ChEBI" id="CHEBI:80291"/>
        <dbReference type="EC" id="4.2.1.84"/>
    </reaction>
</comment>
<comment type="cofactor">
    <cofactor evidence="3">
        <name>Fe(3+)</name>
        <dbReference type="ChEBI" id="CHEBI:29034"/>
    </cofactor>
    <text evidence="3">Binds 1 Fe(3+) ion per subunit.</text>
</comment>
<comment type="activity regulation">
    <text>Inactivated by nitrosylation of the iron center in the dark and activated by photo-induced nitric oxide (NO) release. Inactivated by oxidation of Cys-115 to a sulfenic acid.</text>
</comment>
<comment type="subunit">
    <text>Heterodimer of an alpha and a beta chain.</text>
</comment>
<comment type="PTM">
    <text evidence="2 3">Oxidation on Cys-113 is essential for the activity.</text>
</comment>
<comment type="PTM">
    <text evidence="3">Oxidation on Cys-115 stabilizes the Fe-NO ligand coordinated in the inactive form.</text>
</comment>
<comment type="similarity">
    <text evidence="4">Belongs to the nitrile hydratase subunit alpha family.</text>
</comment>
<feature type="initiator methionine" description="Removed" evidence="1">
    <location>
        <position position="1"/>
    </location>
</feature>
<feature type="chain" id="PRO_0000186823" description="Nitrile hydratase subunit alpha">
    <location>
        <begin position="2"/>
        <end position="207"/>
    </location>
</feature>
<feature type="binding site" evidence="3 5">
    <location>
        <position position="110"/>
    </location>
    <ligand>
        <name>Fe(3+)</name>
        <dbReference type="ChEBI" id="CHEBI:29034"/>
    </ligand>
</feature>
<feature type="binding site" evidence="3 5">
    <location>
        <position position="113"/>
    </location>
    <ligand>
        <name>Fe(3+)</name>
        <dbReference type="ChEBI" id="CHEBI:29034"/>
    </ligand>
</feature>
<feature type="binding site" evidence="3 5">
    <location>
        <position position="114"/>
    </location>
    <ligand>
        <name>Fe(3+)</name>
        <dbReference type="ChEBI" id="CHEBI:29034"/>
    </ligand>
</feature>
<feature type="binding site" evidence="3 5">
    <location>
        <position position="115"/>
    </location>
    <ligand>
        <name>Fe(3+)</name>
        <dbReference type="ChEBI" id="CHEBI:29034"/>
    </ligand>
</feature>
<feature type="modified residue" description="Cysteine sulfinic acid (-SO2H)" evidence="2 3">
    <location>
        <position position="113"/>
    </location>
</feature>
<feature type="modified residue" description="Cysteine sulfenic acid (-SOH)" evidence="3">
    <location>
        <position position="115"/>
    </location>
</feature>
<feature type="sequence conflict" description="In Ref. 1; AA sequence." evidence="4" ref="1">
    <original>P</original>
    <variation>A</variation>
    <location>
        <position position="18"/>
    </location>
</feature>
<feature type="sequence conflict" description="In Ref. 6; AA sequence." evidence="4" ref="6">
    <original>S</original>
    <variation>T</variation>
    <location>
        <position position="20"/>
    </location>
</feature>
<feature type="helix" evidence="6">
    <location>
        <begin position="19"/>
        <end position="31"/>
    </location>
</feature>
<feature type="turn" evidence="6">
    <location>
        <begin position="32"/>
        <end position="34"/>
    </location>
</feature>
<feature type="helix" evidence="6">
    <location>
        <begin position="40"/>
        <end position="50"/>
    </location>
</feature>
<feature type="helix" evidence="6">
    <location>
        <begin position="54"/>
        <end position="66"/>
    </location>
</feature>
<feature type="helix" evidence="6">
    <location>
        <begin position="68"/>
        <end position="76"/>
    </location>
</feature>
<feature type="helix" evidence="6">
    <location>
        <begin position="78"/>
        <end position="84"/>
    </location>
</feature>
<feature type="strand" evidence="6">
    <location>
        <begin position="92"/>
        <end position="99"/>
    </location>
</feature>
<feature type="strand" evidence="6">
    <location>
        <begin position="104"/>
        <end position="109"/>
    </location>
</feature>
<feature type="helix" evidence="6">
    <location>
        <begin position="118"/>
        <end position="121"/>
    </location>
</feature>
<feature type="helix" evidence="6">
    <location>
        <begin position="126"/>
        <end position="129"/>
    </location>
</feature>
<feature type="helix" evidence="6">
    <location>
        <begin position="131"/>
        <end position="136"/>
    </location>
</feature>
<feature type="turn" evidence="6">
    <location>
        <begin position="137"/>
        <end position="139"/>
    </location>
</feature>
<feature type="helix" evidence="6">
    <location>
        <begin position="141"/>
        <end position="148"/>
    </location>
</feature>
<feature type="strand" evidence="6">
    <location>
        <begin position="156"/>
        <end position="162"/>
    </location>
</feature>
<feature type="strand" evidence="6">
    <location>
        <begin position="165"/>
        <end position="172"/>
    </location>
</feature>
<feature type="helix" evidence="6">
    <location>
        <begin position="184"/>
        <end position="190"/>
    </location>
</feature>
<feature type="helix" evidence="6">
    <location>
        <begin position="193"/>
        <end position="197"/>
    </location>
</feature>
<feature type="strand" evidence="6">
    <location>
        <begin position="198"/>
        <end position="200"/>
    </location>
</feature>
<name>NHAA_RHOER</name>
<sequence>MSVTIDHTTENAAPAQAPVSDRAWALFRALDGKGLVPDGYVEGWKKTFEEDFSPRRGAELVARAWTDPEFRQLLLTDGTAAVAQYGYLGPQGEYIVAVEDTPTLKNVIVCSLCSCTAWPILGLPPTWYKSFEYRARVVREPRKVLSEMGTEIASDIEIRVYDTTAETRYMVLPQRPAGTEGWSQEQLQEIVTKDCLIGVAIPQVPTV</sequence>
<dbReference type="EC" id="4.2.1.84"/>
<dbReference type="EMBL" id="X14668">
    <property type="protein sequence ID" value="CAA32797.1"/>
    <property type="molecule type" value="Genomic_DNA"/>
</dbReference>
<dbReference type="EMBL" id="X54074">
    <property type="protein sequence ID" value="CAA38010.1"/>
    <property type="molecule type" value="Genomic_DNA"/>
</dbReference>
<dbReference type="EMBL" id="Z48769">
    <property type="protein sequence ID" value="CAA88685.1"/>
    <property type="molecule type" value="Genomic_DNA"/>
</dbReference>
<dbReference type="EMBL" id="AB016078">
    <property type="protein sequence ID" value="BAA36597.1"/>
    <property type="molecule type" value="Genomic_DNA"/>
</dbReference>
<dbReference type="EMBL" id="M60264">
    <property type="protein sequence ID" value="AAA62722.1"/>
    <property type="molecule type" value="Genomic_DNA"/>
</dbReference>
<dbReference type="PIR" id="B37806">
    <property type="entry name" value="B37806"/>
</dbReference>
<dbReference type="RefSeq" id="WP_166813401.1">
    <property type="nucleotide sequence ID" value="NZ_CP032403.1"/>
</dbReference>
<dbReference type="PDB" id="1AHJ">
    <property type="method" value="X-ray"/>
    <property type="resolution" value="2.65 A"/>
    <property type="chains" value="A/C/E/G=1-207"/>
</dbReference>
<dbReference type="PDB" id="2AHJ">
    <property type="method" value="X-ray"/>
    <property type="resolution" value="1.70 A"/>
    <property type="chains" value="A/C=2-207"/>
</dbReference>
<dbReference type="PDB" id="2CYZ">
    <property type="method" value="X-ray"/>
    <property type="resolution" value="1.55 A"/>
    <property type="chains" value="A=2-207"/>
</dbReference>
<dbReference type="PDB" id="2CZ0">
    <property type="method" value="X-ray"/>
    <property type="resolution" value="1.50 A"/>
    <property type="chains" value="A=2-207"/>
</dbReference>
<dbReference type="PDB" id="2CZ1">
    <property type="method" value="X-ray"/>
    <property type="resolution" value="1.39 A"/>
    <property type="chains" value="A=2-207"/>
</dbReference>
<dbReference type="PDB" id="2CZ6">
    <property type="method" value="X-ray"/>
    <property type="resolution" value="1.50 A"/>
    <property type="chains" value="A=2-207"/>
</dbReference>
<dbReference type="PDB" id="2CZ7">
    <property type="method" value="X-ray"/>
    <property type="resolution" value="1.80 A"/>
    <property type="chains" value="A=2-207"/>
</dbReference>
<dbReference type="PDB" id="2D0Q">
    <property type="method" value="X-ray"/>
    <property type="resolution" value="1.65 A"/>
    <property type="chains" value="A=2-207"/>
</dbReference>
<dbReference type="PDB" id="2QDY">
    <property type="method" value="X-ray"/>
    <property type="resolution" value="1.30 A"/>
    <property type="chains" value="A=1-207"/>
</dbReference>
<dbReference type="PDB" id="2ZCF">
    <property type="method" value="X-ray"/>
    <property type="resolution" value="1.43 A"/>
    <property type="chains" value="A=2-207"/>
</dbReference>
<dbReference type="PDB" id="2ZPB">
    <property type="method" value="X-ray"/>
    <property type="resolution" value="1.30 A"/>
    <property type="chains" value="A=2-207"/>
</dbReference>
<dbReference type="PDB" id="2ZPE">
    <property type="method" value="X-ray"/>
    <property type="resolution" value="1.48 A"/>
    <property type="chains" value="A=2-207"/>
</dbReference>
<dbReference type="PDB" id="2ZPF">
    <property type="method" value="X-ray"/>
    <property type="resolution" value="1.48 A"/>
    <property type="chains" value="A=2-207"/>
</dbReference>
<dbReference type="PDB" id="2ZPG">
    <property type="method" value="X-ray"/>
    <property type="resolution" value="1.39 A"/>
    <property type="chains" value="A=2-207"/>
</dbReference>
<dbReference type="PDB" id="2ZPH">
    <property type="method" value="X-ray"/>
    <property type="resolution" value="1.59 A"/>
    <property type="chains" value="A=2-207"/>
</dbReference>
<dbReference type="PDB" id="2ZPI">
    <property type="method" value="X-ray"/>
    <property type="resolution" value="1.49 A"/>
    <property type="chains" value="A=2-207"/>
</dbReference>
<dbReference type="PDB" id="3A8G">
    <property type="method" value="X-ray"/>
    <property type="resolution" value="1.11 A"/>
    <property type="chains" value="A=1-207"/>
</dbReference>
<dbReference type="PDB" id="3A8H">
    <property type="method" value="X-ray"/>
    <property type="resolution" value="1.66 A"/>
    <property type="chains" value="A=1-207"/>
</dbReference>
<dbReference type="PDB" id="3A8L">
    <property type="method" value="X-ray"/>
    <property type="resolution" value="1.63 A"/>
    <property type="chains" value="A=1-207"/>
</dbReference>
<dbReference type="PDB" id="3A8M">
    <property type="method" value="X-ray"/>
    <property type="resolution" value="1.32 A"/>
    <property type="chains" value="A=1-207"/>
</dbReference>
<dbReference type="PDB" id="3A8O">
    <property type="method" value="X-ray"/>
    <property type="resolution" value="1.47 A"/>
    <property type="chains" value="A=1-207"/>
</dbReference>
<dbReference type="PDB" id="3WVD">
    <property type="method" value="X-ray"/>
    <property type="resolution" value="1.18 A"/>
    <property type="chains" value="A=1-207"/>
</dbReference>
<dbReference type="PDB" id="3WVE">
    <property type="method" value="X-ray"/>
    <property type="resolution" value="1.57 A"/>
    <property type="chains" value="A=1-207"/>
</dbReference>
<dbReference type="PDB" id="3X20">
    <property type="method" value="X-ray"/>
    <property type="resolution" value="1.18 A"/>
    <property type="chains" value="A=1-207"/>
</dbReference>
<dbReference type="PDB" id="3X24">
    <property type="method" value="X-ray"/>
    <property type="resolution" value="1.24 A"/>
    <property type="chains" value="A=1-207"/>
</dbReference>
<dbReference type="PDB" id="3X25">
    <property type="method" value="X-ray"/>
    <property type="resolution" value="1.20 A"/>
    <property type="chains" value="A=1-207"/>
</dbReference>
<dbReference type="PDB" id="3X26">
    <property type="method" value="X-ray"/>
    <property type="resolution" value="1.34 A"/>
    <property type="chains" value="A=1-207"/>
</dbReference>
<dbReference type="PDB" id="3X28">
    <property type="method" value="X-ray"/>
    <property type="resolution" value="1.65 A"/>
    <property type="chains" value="A=1-207"/>
</dbReference>
<dbReference type="PDBsum" id="1AHJ"/>
<dbReference type="PDBsum" id="2AHJ"/>
<dbReference type="PDBsum" id="2CYZ"/>
<dbReference type="PDBsum" id="2CZ0"/>
<dbReference type="PDBsum" id="2CZ1"/>
<dbReference type="PDBsum" id="2CZ6"/>
<dbReference type="PDBsum" id="2CZ7"/>
<dbReference type="PDBsum" id="2D0Q"/>
<dbReference type="PDBsum" id="2QDY"/>
<dbReference type="PDBsum" id="2ZCF"/>
<dbReference type="PDBsum" id="2ZPB"/>
<dbReference type="PDBsum" id="2ZPE"/>
<dbReference type="PDBsum" id="2ZPF"/>
<dbReference type="PDBsum" id="2ZPG"/>
<dbReference type="PDBsum" id="2ZPH"/>
<dbReference type="PDBsum" id="2ZPI"/>
<dbReference type="PDBsum" id="3A8G"/>
<dbReference type="PDBsum" id="3A8H"/>
<dbReference type="PDBsum" id="3A8L"/>
<dbReference type="PDBsum" id="3A8M"/>
<dbReference type="PDBsum" id="3A8O"/>
<dbReference type="PDBsum" id="3WVD"/>
<dbReference type="PDBsum" id="3WVE"/>
<dbReference type="PDBsum" id="3X20"/>
<dbReference type="PDBsum" id="3X24"/>
<dbReference type="PDBsum" id="3X25"/>
<dbReference type="PDBsum" id="3X26"/>
<dbReference type="PDBsum" id="3X28"/>
<dbReference type="SMR" id="P13448"/>
<dbReference type="DIP" id="DIP-6075N"/>
<dbReference type="IntAct" id="P13448">
    <property type="interactions" value="1"/>
</dbReference>
<dbReference type="STRING" id="1833.XU06_28845"/>
<dbReference type="BRENDA" id="4.2.1.84">
    <property type="organism ID" value="5389"/>
</dbReference>
<dbReference type="SABIO-RK" id="P13448"/>
<dbReference type="EvolutionaryTrace" id="P13448"/>
<dbReference type="GO" id="GO:0018822">
    <property type="term" value="F:nitrile hydratase activity"/>
    <property type="evidence" value="ECO:0007669"/>
    <property type="project" value="UniProtKB-EC"/>
</dbReference>
<dbReference type="GO" id="GO:0046914">
    <property type="term" value="F:transition metal ion binding"/>
    <property type="evidence" value="ECO:0007669"/>
    <property type="project" value="InterPro"/>
</dbReference>
<dbReference type="Gene3D" id="3.90.330.10">
    <property type="entry name" value="Nitrile hydratase alpha /Thiocyanate hydrolase gamma"/>
    <property type="match status" value="1"/>
</dbReference>
<dbReference type="InterPro" id="IPR036648">
    <property type="entry name" value="CN_Hdrase_a/SCN_Hdrase_g_sf"/>
</dbReference>
<dbReference type="InterPro" id="IPR004232">
    <property type="entry name" value="CN_Hdrtase_a/SCN_Hdrlase_g"/>
</dbReference>
<dbReference type="InterPro" id="IPR023900">
    <property type="entry name" value="CN_Hdrtase_asu/SCN_Hdrlase_gsu"/>
</dbReference>
<dbReference type="InterPro" id="IPR018141">
    <property type="entry name" value="Nitrile_hydratase_asu"/>
</dbReference>
<dbReference type="NCBIfam" id="TIGR01323">
    <property type="entry name" value="nitrile_alph"/>
    <property type="match status" value="1"/>
</dbReference>
<dbReference type="Pfam" id="PF02979">
    <property type="entry name" value="NHase_alpha"/>
    <property type="match status" value="1"/>
</dbReference>
<dbReference type="PIRSF" id="PIRSF001426">
    <property type="entry name" value="NHase_alpha"/>
    <property type="match status" value="1"/>
</dbReference>
<dbReference type="SUPFAM" id="SSF56209">
    <property type="entry name" value="Nitrile hydratase alpha chain"/>
    <property type="match status" value="1"/>
</dbReference>
<reference key="1">
    <citation type="journal article" date="1989" name="Eur. J. Biochem.">
        <title>Primary structure of nitrile hydratase deduced from the nucleotide sequence of a Rhodococcus species and its expression in Escherichia coli.</title>
        <authorList>
            <person name="Ikehata O."/>
            <person name="Nishiyama M."/>
            <person name="Horinouchi S."/>
            <person name="Beppu T."/>
        </authorList>
    </citation>
    <scope>NUCLEOTIDE SEQUENCE [GENOMIC DNA]</scope>
    <scope>PARTIAL PROTEIN SEQUENCE</scope>
    <source>
        <strain>N-774</strain>
    </source>
</reference>
<reference key="2">
    <citation type="journal article" date="1991" name="Biochim. Biophys. Acta">
        <title>Cloning and characterization of an amidase gene from Rhodococcus species N-774 and its expression in Escherichia coli.</title>
        <authorList>
            <person name="Hashimoto Y."/>
            <person name="Nishiyama M."/>
            <person name="Ikehata O."/>
            <person name="Horinouchi S."/>
            <person name="Beppu T."/>
        </authorList>
    </citation>
    <scope>NUCLEOTIDE SEQUENCE [GENOMIC DNA]</scope>
    <source>
        <strain>N-774</strain>
    </source>
</reference>
<reference key="3">
    <citation type="submission" date="1995-03" db="EMBL/GenBank/DDBJ databases">
        <authorList>
            <person name="Bigey F."/>
            <person name="Chebrou H."/>
            <person name="Arnaud A."/>
            <person name="Galzy P."/>
        </authorList>
    </citation>
    <scope>NUCLEOTIDE SEQUENCE [GENOMIC DNA]</scope>
    <source>
        <strain>ACV2</strain>
    </source>
</reference>
<reference key="4">
    <citation type="journal article" date="1999" name="J. Biochem.">
        <title>Functional expression of nitrile hydratase in Escherichia coli: requirement of a nitrile hydratase activator and post-translational modification of a ligand cysteine.</title>
        <authorList>
            <person name="Nojiri M."/>
            <person name="Yohda M."/>
            <person name="Odaka M."/>
            <person name="Matsushita Y."/>
            <person name="Tsujimura M."/>
            <person name="Yoshida T."/>
            <person name="Dohmae N."/>
            <person name="Takio K."/>
            <person name="Endo I."/>
        </authorList>
    </citation>
    <scope>NUCLEOTIDE SEQUENCE [GENOMIC DNA]</scope>
    <source>
        <strain>N-771</strain>
    </source>
</reference>
<reference key="5">
    <citation type="journal article" date="1990" name="J. Bacteriol.">
        <title>Purification, cloning, and primary structure of an enantiomer-selective amidase from Brevibacterium sp. strain R312: structural evidence for genetic coupling with nitrile hydratase.</title>
        <authorList>
            <person name="Mayaux J.-F."/>
            <person name="Cerbelaud E."/>
            <person name="Soubrier F."/>
            <person name="Faucher D."/>
            <person name="Petre D."/>
        </authorList>
    </citation>
    <scope>NUCLEOTIDE SEQUENCE [GENOMIC DNA] OF 1-188</scope>
    <source>
        <strain>Brevibacterium sp. R312</strain>
    </source>
</reference>
<reference key="6">
    <citation type="journal article" date="1989" name="FEBS Lett.">
        <title>Nitrile hydratase of Rhodococcus sp. N-774. Purification and amino acid sequences.</title>
        <authorList>
            <person name="Endo T."/>
            <person name="Watanabe I."/>
        </authorList>
    </citation>
    <scope>PROTEIN SEQUENCE OF 2-20</scope>
    <source>
        <strain>N-774</strain>
    </source>
</reference>
<reference key="7">
    <citation type="journal article" date="1997" name="Structure">
        <title>Crystal structure of nitrile hydratase reveals a novel iron centre in a novel fold.</title>
        <authorList>
            <person name="Huang W."/>
            <person name="Jia J."/>
            <person name="Cummings J."/>
            <person name="Nelson M."/>
            <person name="Schneider G."/>
            <person name="Lindqvist Y."/>
        </authorList>
    </citation>
    <scope>X-RAY CRYSTALLOGRAPHY (2.65 ANGSTROMS)</scope>
    <source>
        <strain>Brevibacterium sp. R312</strain>
    </source>
</reference>
<reference evidence="5" key="8">
    <citation type="journal article" date="1998" name="Nat. Struct. Biol.">
        <title>Novel non-heme iron center of nitrile hydratase with a claw setting of oxygen atoms.</title>
        <authorList>
            <person name="Nagashima S."/>
            <person name="Nakasako M."/>
            <person name="Dohmae N."/>
            <person name="Tsujimura M."/>
            <person name="Takio K."/>
            <person name="Odaka M."/>
            <person name="Yohda M."/>
            <person name="Kamiya N."/>
            <person name="Endo I."/>
        </authorList>
    </citation>
    <scope>X-RAY CRYSTALLOGRAPHY (1.7 ANGSTROMS) IN COMPLEX WITH IRON</scope>
    <scope>COFACTOR</scope>
    <scope>IDENTIFICATION BY MASS SPECTROMETRY</scope>
    <scope>OXIDATION AT CYS-113 AND CYS-115</scope>
    <scope>LIGAND-BINDING</scope>
</reference>
<reference key="9">
    <citation type="journal article" date="1997" name="J. Biol. Chem.">
        <title>Structure of the photoreactive iron center of the nitrile hydratase from Rhodococcus sp. N-771. Evidence of a novel post-translational modification in the cysteine ligand.</title>
        <authorList>
            <person name="Tsujimura M."/>
            <person name="Dohmae N."/>
            <person name="Odaka M."/>
            <person name="Chijimatsu M."/>
            <person name="Takio K."/>
            <person name="Yohda M."/>
            <person name="Hoshino M."/>
            <person name="Nagashima S."/>
            <person name="Endo I."/>
        </authorList>
    </citation>
    <scope>EPR SPECTROSCOPY OF 106-129</scope>
    <scope>IDENTIFICATION BY MASS SPECTROMETRY</scope>
    <scope>OXIDATION AT CYS-113</scope>
    <source>
        <strain>N-771</strain>
    </source>
</reference>
<organism>
    <name type="scientific">Rhodococcus erythropolis</name>
    <name type="common">Arthrobacter picolinophilus</name>
    <dbReference type="NCBI Taxonomy" id="1833"/>
    <lineage>
        <taxon>Bacteria</taxon>
        <taxon>Bacillati</taxon>
        <taxon>Actinomycetota</taxon>
        <taxon>Actinomycetes</taxon>
        <taxon>Mycobacteriales</taxon>
        <taxon>Nocardiaceae</taxon>
        <taxon>Rhodococcus</taxon>
        <taxon>Rhodococcus erythropolis group</taxon>
    </lineage>
</organism>
<proteinExistence type="evidence at protein level"/>
<keyword id="KW-0002">3D-structure</keyword>
<keyword id="KW-0903">Direct protein sequencing</keyword>
<keyword id="KW-0408">Iron</keyword>
<keyword id="KW-0456">Lyase</keyword>
<keyword id="KW-0479">Metal-binding</keyword>
<keyword id="KW-0558">Oxidation</keyword>